<feature type="chain" id="PRO_1000057066" description="Endoribonuclease YbeY">
    <location>
        <begin position="1"/>
        <end position="159"/>
    </location>
</feature>
<feature type="binding site" evidence="1">
    <location>
        <position position="123"/>
    </location>
    <ligand>
        <name>Zn(2+)</name>
        <dbReference type="ChEBI" id="CHEBI:29105"/>
        <note>catalytic</note>
    </ligand>
</feature>
<feature type="binding site" evidence="1">
    <location>
        <position position="127"/>
    </location>
    <ligand>
        <name>Zn(2+)</name>
        <dbReference type="ChEBI" id="CHEBI:29105"/>
        <note>catalytic</note>
    </ligand>
</feature>
<feature type="binding site" evidence="1">
    <location>
        <position position="133"/>
    </location>
    <ligand>
        <name>Zn(2+)</name>
        <dbReference type="ChEBI" id="CHEBI:29105"/>
        <note>catalytic</note>
    </ligand>
</feature>
<sequence>MTLLIDLIDETGQVSKEQLEEVEKLLQFAADALEVKDQAEVSVTIVSNEEIHQINKEYRGKDAPTDVISFALEEEGEGEIEIIGADDIPPVLGDIIISVDRTKEQAEEYGHSFMRELGFLTIHGFLHLLGFDHMTEEDEKEMFAKQTKILDDYGLSRSS</sequence>
<comment type="function">
    <text evidence="1">Single strand-specific metallo-endoribonuclease involved in late-stage 70S ribosome quality control and in maturation of the 3' terminus of the 16S rRNA.</text>
</comment>
<comment type="cofactor">
    <cofactor evidence="1">
        <name>Zn(2+)</name>
        <dbReference type="ChEBI" id="CHEBI:29105"/>
    </cofactor>
    <text evidence="1">Binds 1 zinc ion.</text>
</comment>
<comment type="subcellular location">
    <subcellularLocation>
        <location evidence="1">Cytoplasm</location>
    </subcellularLocation>
</comment>
<comment type="similarity">
    <text evidence="1">Belongs to the endoribonuclease YbeY family.</text>
</comment>
<accession>A8FFB6</accession>
<reference key="1">
    <citation type="journal article" date="2007" name="PLoS ONE">
        <title>Paradoxical DNA repair and peroxide resistance gene conservation in Bacillus pumilus SAFR-032.</title>
        <authorList>
            <person name="Gioia J."/>
            <person name="Yerrapragada S."/>
            <person name="Qin X."/>
            <person name="Jiang H."/>
            <person name="Igboeli O.C."/>
            <person name="Muzny D."/>
            <person name="Dugan-Rocha S."/>
            <person name="Ding Y."/>
            <person name="Hawes A."/>
            <person name="Liu W."/>
            <person name="Perez L."/>
            <person name="Kovar C."/>
            <person name="Dinh H."/>
            <person name="Lee S."/>
            <person name="Nazareth L."/>
            <person name="Blyth P."/>
            <person name="Holder M."/>
            <person name="Buhay C."/>
            <person name="Tirumalai M.R."/>
            <person name="Liu Y."/>
            <person name="Dasgupta I."/>
            <person name="Bokhetache L."/>
            <person name="Fujita M."/>
            <person name="Karouia F."/>
            <person name="Eswara Moorthy P."/>
            <person name="Siefert J."/>
            <person name="Uzman A."/>
            <person name="Buzumbo P."/>
            <person name="Verma A."/>
            <person name="Zwiya H."/>
            <person name="McWilliams B.D."/>
            <person name="Olowu A."/>
            <person name="Clinkenbeard K.D."/>
            <person name="Newcombe D."/>
            <person name="Golebiewski L."/>
            <person name="Petrosino J.F."/>
            <person name="Nicholson W.L."/>
            <person name="Fox G.E."/>
            <person name="Venkateswaran K."/>
            <person name="Highlander S.K."/>
            <person name="Weinstock G.M."/>
        </authorList>
    </citation>
    <scope>NUCLEOTIDE SEQUENCE [LARGE SCALE GENOMIC DNA]</scope>
    <source>
        <strain>SAFR-032</strain>
    </source>
</reference>
<protein>
    <recommendedName>
        <fullName evidence="1">Endoribonuclease YbeY</fullName>
        <ecNumber evidence="1">3.1.-.-</ecNumber>
    </recommendedName>
</protein>
<name>YBEY_BACP2</name>
<dbReference type="EC" id="3.1.-.-" evidence="1"/>
<dbReference type="EMBL" id="CP000813">
    <property type="protein sequence ID" value="ABV62933.1"/>
    <property type="molecule type" value="Genomic_DNA"/>
</dbReference>
<dbReference type="RefSeq" id="WP_012010615.1">
    <property type="nucleotide sequence ID" value="NZ_VEIS01000005.1"/>
</dbReference>
<dbReference type="SMR" id="A8FFB6"/>
<dbReference type="STRING" id="315750.BPUM_2264"/>
<dbReference type="GeneID" id="23399425"/>
<dbReference type="KEGG" id="bpu:BPUM_2264"/>
<dbReference type="eggNOG" id="COG0319">
    <property type="taxonomic scope" value="Bacteria"/>
</dbReference>
<dbReference type="HOGENOM" id="CLU_106710_3_0_9"/>
<dbReference type="OrthoDB" id="9807740at2"/>
<dbReference type="Proteomes" id="UP000001355">
    <property type="component" value="Chromosome"/>
</dbReference>
<dbReference type="GO" id="GO:0005737">
    <property type="term" value="C:cytoplasm"/>
    <property type="evidence" value="ECO:0007669"/>
    <property type="project" value="UniProtKB-SubCell"/>
</dbReference>
<dbReference type="GO" id="GO:0004222">
    <property type="term" value="F:metalloendopeptidase activity"/>
    <property type="evidence" value="ECO:0007669"/>
    <property type="project" value="InterPro"/>
</dbReference>
<dbReference type="GO" id="GO:0004521">
    <property type="term" value="F:RNA endonuclease activity"/>
    <property type="evidence" value="ECO:0007669"/>
    <property type="project" value="UniProtKB-UniRule"/>
</dbReference>
<dbReference type="GO" id="GO:0008270">
    <property type="term" value="F:zinc ion binding"/>
    <property type="evidence" value="ECO:0007669"/>
    <property type="project" value="UniProtKB-UniRule"/>
</dbReference>
<dbReference type="GO" id="GO:0006364">
    <property type="term" value="P:rRNA processing"/>
    <property type="evidence" value="ECO:0007669"/>
    <property type="project" value="UniProtKB-UniRule"/>
</dbReference>
<dbReference type="Gene3D" id="3.40.390.30">
    <property type="entry name" value="Metalloproteases ('zincins'), catalytic domain"/>
    <property type="match status" value="1"/>
</dbReference>
<dbReference type="HAMAP" id="MF_00009">
    <property type="entry name" value="Endoribonucl_YbeY"/>
    <property type="match status" value="1"/>
</dbReference>
<dbReference type="InterPro" id="IPR023091">
    <property type="entry name" value="MetalPrtase_cat_dom_sf_prd"/>
</dbReference>
<dbReference type="InterPro" id="IPR002036">
    <property type="entry name" value="YbeY"/>
</dbReference>
<dbReference type="InterPro" id="IPR020549">
    <property type="entry name" value="YbeY_CS"/>
</dbReference>
<dbReference type="NCBIfam" id="TIGR00043">
    <property type="entry name" value="rRNA maturation RNase YbeY"/>
    <property type="match status" value="1"/>
</dbReference>
<dbReference type="PANTHER" id="PTHR46986">
    <property type="entry name" value="ENDORIBONUCLEASE YBEY, CHLOROPLASTIC"/>
    <property type="match status" value="1"/>
</dbReference>
<dbReference type="PANTHER" id="PTHR46986:SF1">
    <property type="entry name" value="ENDORIBONUCLEASE YBEY, CHLOROPLASTIC"/>
    <property type="match status" value="1"/>
</dbReference>
<dbReference type="Pfam" id="PF02130">
    <property type="entry name" value="YbeY"/>
    <property type="match status" value="1"/>
</dbReference>
<dbReference type="SUPFAM" id="SSF55486">
    <property type="entry name" value="Metalloproteases ('zincins'), catalytic domain"/>
    <property type="match status" value="1"/>
</dbReference>
<dbReference type="PROSITE" id="PS01306">
    <property type="entry name" value="UPF0054"/>
    <property type="match status" value="1"/>
</dbReference>
<keyword id="KW-0963">Cytoplasm</keyword>
<keyword id="KW-0255">Endonuclease</keyword>
<keyword id="KW-0378">Hydrolase</keyword>
<keyword id="KW-0479">Metal-binding</keyword>
<keyword id="KW-0540">Nuclease</keyword>
<keyword id="KW-0690">Ribosome biogenesis</keyword>
<keyword id="KW-0698">rRNA processing</keyword>
<keyword id="KW-0862">Zinc</keyword>
<gene>
    <name evidence="1" type="primary">ybeY</name>
    <name type="ordered locus">BPUM_2264</name>
</gene>
<evidence type="ECO:0000255" key="1">
    <source>
        <dbReference type="HAMAP-Rule" id="MF_00009"/>
    </source>
</evidence>
<proteinExistence type="inferred from homology"/>
<organism>
    <name type="scientific">Bacillus pumilus (strain SAFR-032)</name>
    <dbReference type="NCBI Taxonomy" id="315750"/>
    <lineage>
        <taxon>Bacteria</taxon>
        <taxon>Bacillati</taxon>
        <taxon>Bacillota</taxon>
        <taxon>Bacilli</taxon>
        <taxon>Bacillales</taxon>
        <taxon>Bacillaceae</taxon>
        <taxon>Bacillus</taxon>
    </lineage>
</organism>